<protein>
    <recommendedName>
        <fullName evidence="1">Ribosome maturation factor RimP</fullName>
    </recommendedName>
</protein>
<feature type="chain" id="PRO_0000384639" description="Ribosome maturation factor RimP">
    <location>
        <begin position="1"/>
        <end position="152"/>
    </location>
</feature>
<keyword id="KW-0963">Cytoplasm</keyword>
<keyword id="KW-1185">Reference proteome</keyword>
<keyword id="KW-0690">Ribosome biogenesis</keyword>
<sequence>MEQVRKLTGAALEAEGMDLVLAEFKREGGGYILRLYVDKEGGITLGDCTMVSRYVGDLLDAYADEMPRYRLEVSSPGLDRPLTREDHFRRFEGRTALIVTKEPREGRKKFRGVLSGALNGVITLVADEVPMEFALHEIESARLQYKHGESTC</sequence>
<organism>
    <name type="scientific">Desulfatibacillum aliphaticivorans</name>
    <dbReference type="NCBI Taxonomy" id="218208"/>
    <lineage>
        <taxon>Bacteria</taxon>
        <taxon>Pseudomonadati</taxon>
        <taxon>Thermodesulfobacteriota</taxon>
        <taxon>Desulfobacteria</taxon>
        <taxon>Desulfobacterales</taxon>
        <taxon>Desulfatibacillaceae</taxon>
        <taxon>Desulfatibacillum</taxon>
    </lineage>
</organism>
<reference key="1">
    <citation type="journal article" date="2012" name="Environ. Microbiol.">
        <title>The genome sequence of Desulfatibacillum alkenivorans AK-01: a blueprint for anaerobic alkane oxidation.</title>
        <authorList>
            <person name="Callaghan A.V."/>
            <person name="Morris B.E."/>
            <person name="Pereira I.A."/>
            <person name="McInerney M.J."/>
            <person name="Austin R.N."/>
            <person name="Groves J.T."/>
            <person name="Kukor J.J."/>
            <person name="Suflita J.M."/>
            <person name="Young L.Y."/>
            <person name="Zylstra G.J."/>
            <person name="Wawrik B."/>
        </authorList>
    </citation>
    <scope>NUCLEOTIDE SEQUENCE [LARGE SCALE GENOMIC DNA]</scope>
    <source>
        <strain>AK-01</strain>
    </source>
</reference>
<evidence type="ECO:0000255" key="1">
    <source>
        <dbReference type="HAMAP-Rule" id="MF_01077"/>
    </source>
</evidence>
<evidence type="ECO:0000305" key="2"/>
<accession>B8FCY3</accession>
<proteinExistence type="inferred from homology"/>
<comment type="function">
    <text evidence="1">Required for maturation of 30S ribosomal subunits.</text>
</comment>
<comment type="subcellular location">
    <subcellularLocation>
        <location evidence="1">Cytoplasm</location>
    </subcellularLocation>
</comment>
<comment type="similarity">
    <text evidence="1">Belongs to the RimP family.</text>
</comment>
<comment type="sequence caution" evidence="2">
    <conflict type="erroneous initiation">
        <sequence resource="EMBL-CDS" id="ACL06414"/>
    </conflict>
</comment>
<name>RIMP_DESAL</name>
<dbReference type="EMBL" id="CP001322">
    <property type="protein sequence ID" value="ACL06414.1"/>
    <property type="status" value="ALT_INIT"/>
    <property type="molecule type" value="Genomic_DNA"/>
</dbReference>
<dbReference type="SMR" id="B8FCY3"/>
<dbReference type="KEGG" id="dal:Dalk_4736"/>
<dbReference type="eggNOG" id="COG0779">
    <property type="taxonomic scope" value="Bacteria"/>
</dbReference>
<dbReference type="HOGENOM" id="CLU_070525_2_2_7"/>
<dbReference type="Proteomes" id="UP000000739">
    <property type="component" value="Chromosome"/>
</dbReference>
<dbReference type="GO" id="GO:0005829">
    <property type="term" value="C:cytosol"/>
    <property type="evidence" value="ECO:0007669"/>
    <property type="project" value="TreeGrafter"/>
</dbReference>
<dbReference type="GO" id="GO:0000028">
    <property type="term" value="P:ribosomal small subunit assembly"/>
    <property type="evidence" value="ECO:0007669"/>
    <property type="project" value="TreeGrafter"/>
</dbReference>
<dbReference type="GO" id="GO:0006412">
    <property type="term" value="P:translation"/>
    <property type="evidence" value="ECO:0007669"/>
    <property type="project" value="TreeGrafter"/>
</dbReference>
<dbReference type="CDD" id="cd01734">
    <property type="entry name" value="YlxS_C"/>
    <property type="match status" value="1"/>
</dbReference>
<dbReference type="Gene3D" id="2.30.30.180">
    <property type="entry name" value="Ribosome maturation factor RimP, C-terminal domain"/>
    <property type="match status" value="1"/>
</dbReference>
<dbReference type="Gene3D" id="3.30.300.70">
    <property type="entry name" value="RimP-like superfamily, N-terminal"/>
    <property type="match status" value="1"/>
</dbReference>
<dbReference type="HAMAP" id="MF_01077">
    <property type="entry name" value="RimP"/>
    <property type="match status" value="1"/>
</dbReference>
<dbReference type="InterPro" id="IPR003728">
    <property type="entry name" value="Ribosome_maturation_RimP"/>
</dbReference>
<dbReference type="InterPro" id="IPR028998">
    <property type="entry name" value="RimP_C"/>
</dbReference>
<dbReference type="InterPro" id="IPR036847">
    <property type="entry name" value="RimP_C_sf"/>
</dbReference>
<dbReference type="InterPro" id="IPR028989">
    <property type="entry name" value="RimP_N"/>
</dbReference>
<dbReference type="InterPro" id="IPR035956">
    <property type="entry name" value="RimP_N_sf"/>
</dbReference>
<dbReference type="PANTHER" id="PTHR33867">
    <property type="entry name" value="RIBOSOME MATURATION FACTOR RIMP"/>
    <property type="match status" value="1"/>
</dbReference>
<dbReference type="PANTHER" id="PTHR33867:SF1">
    <property type="entry name" value="RIBOSOME MATURATION FACTOR RIMP"/>
    <property type="match status" value="1"/>
</dbReference>
<dbReference type="Pfam" id="PF17384">
    <property type="entry name" value="DUF150_C"/>
    <property type="match status" value="1"/>
</dbReference>
<dbReference type="Pfam" id="PF02576">
    <property type="entry name" value="RimP_N"/>
    <property type="match status" value="1"/>
</dbReference>
<dbReference type="SUPFAM" id="SSF74942">
    <property type="entry name" value="YhbC-like, C-terminal domain"/>
    <property type="match status" value="1"/>
</dbReference>
<dbReference type="SUPFAM" id="SSF75420">
    <property type="entry name" value="YhbC-like, N-terminal domain"/>
    <property type="match status" value="1"/>
</dbReference>
<gene>
    <name evidence="1" type="primary">rimP</name>
    <name type="ordered locus">Dalk_4736</name>
</gene>